<comment type="function">
    <text evidence="1">Bidirectionally degrades single-stranded DNA into large acid-insoluble oligonucleotides, which are then degraded further into small acid-soluble oligonucleotides.</text>
</comment>
<comment type="catalytic activity">
    <reaction evidence="1">
        <text>Exonucleolytic cleavage in either 5'- to 3'- or 3'- to 5'-direction to yield nucleoside 5'-phosphates.</text>
        <dbReference type="EC" id="3.1.11.6"/>
    </reaction>
</comment>
<comment type="subunit">
    <text evidence="1">Heterooligomer composed of large and small subunits.</text>
</comment>
<comment type="subcellular location">
    <subcellularLocation>
        <location evidence="1">Cytoplasm</location>
    </subcellularLocation>
</comment>
<comment type="similarity">
    <text evidence="1">Belongs to the XseA family.</text>
</comment>
<protein>
    <recommendedName>
        <fullName evidence="1">Exodeoxyribonuclease 7 large subunit</fullName>
        <ecNumber evidence="1">3.1.11.6</ecNumber>
    </recommendedName>
    <alternativeName>
        <fullName evidence="1">Exodeoxyribonuclease VII large subunit</fullName>
        <shortName evidence="1">Exonuclease VII large subunit</shortName>
    </alternativeName>
</protein>
<gene>
    <name evidence="1" type="primary">xseA</name>
    <name type="ordered locus">HPSH_01345</name>
</gene>
<organism>
    <name type="scientific">Helicobacter pylori (strain Shi470)</name>
    <dbReference type="NCBI Taxonomy" id="512562"/>
    <lineage>
        <taxon>Bacteria</taxon>
        <taxon>Pseudomonadati</taxon>
        <taxon>Campylobacterota</taxon>
        <taxon>Epsilonproteobacteria</taxon>
        <taxon>Campylobacterales</taxon>
        <taxon>Helicobacteraceae</taxon>
        <taxon>Helicobacter</taxon>
    </lineage>
</organism>
<keyword id="KW-0963">Cytoplasm</keyword>
<keyword id="KW-0269">Exonuclease</keyword>
<keyword id="KW-0378">Hydrolase</keyword>
<keyword id="KW-0540">Nuclease</keyword>
<feature type="chain" id="PRO_1000122067" description="Exodeoxyribonuclease 7 large subunit">
    <location>
        <begin position="1"/>
        <end position="420"/>
    </location>
</feature>
<sequence>MDVLSVSEINAQIKALLEATFLQVRVQGEVSNLTIHKVSGHAYFSLKDSQSVIRCVLFKGNANRLKFALKEGQEVVVFGGISAYVPRGDYQINCFEIEPKNIGSLTLALEQLKEKLRLKGYFDKANKLPKPHFPKRVAVITSQNSAAWADMKKIASKRWPMCELVCINALMQGEGCVQSVVESIAYADSFHGTKNAFDAIVVARGGGSMEDLYPFNDEKIADALHLAKTFSMSAIGHESDFLLSDLVADLRASTPSNAMEILLPSSDEWLQRLDGFNLKLHRSFKILLHQKKAHLEHLEASLKRLSFENKHHLNALKLEKLKIALENKTLEFLRFKKTLLEKISTQTLTSPFLQTKTERLNRLENALKLAHANLKLPQFGAFVSKNNQAIELEALKRGDKIELSNEKARASAEILSVDRV</sequence>
<evidence type="ECO:0000255" key="1">
    <source>
        <dbReference type="HAMAP-Rule" id="MF_00378"/>
    </source>
</evidence>
<name>EX7L_HELPS</name>
<accession>B2US91</accession>
<dbReference type="EC" id="3.1.11.6" evidence="1"/>
<dbReference type="EMBL" id="CP001072">
    <property type="protein sequence ID" value="ACD47723.1"/>
    <property type="molecule type" value="Genomic_DNA"/>
</dbReference>
<dbReference type="RefSeq" id="WP_000382875.1">
    <property type="nucleotide sequence ID" value="NC_010698.2"/>
</dbReference>
<dbReference type="SMR" id="B2US91"/>
<dbReference type="KEGG" id="hps:HPSH_01345"/>
<dbReference type="HOGENOM" id="CLU_023625_2_0_7"/>
<dbReference type="GO" id="GO:0005737">
    <property type="term" value="C:cytoplasm"/>
    <property type="evidence" value="ECO:0007669"/>
    <property type="project" value="UniProtKB-SubCell"/>
</dbReference>
<dbReference type="GO" id="GO:0009318">
    <property type="term" value="C:exodeoxyribonuclease VII complex"/>
    <property type="evidence" value="ECO:0007669"/>
    <property type="project" value="InterPro"/>
</dbReference>
<dbReference type="GO" id="GO:0008855">
    <property type="term" value="F:exodeoxyribonuclease VII activity"/>
    <property type="evidence" value="ECO:0007669"/>
    <property type="project" value="UniProtKB-UniRule"/>
</dbReference>
<dbReference type="GO" id="GO:0003676">
    <property type="term" value="F:nucleic acid binding"/>
    <property type="evidence" value="ECO:0007669"/>
    <property type="project" value="InterPro"/>
</dbReference>
<dbReference type="GO" id="GO:0006308">
    <property type="term" value="P:DNA catabolic process"/>
    <property type="evidence" value="ECO:0007669"/>
    <property type="project" value="UniProtKB-UniRule"/>
</dbReference>
<dbReference type="CDD" id="cd04489">
    <property type="entry name" value="ExoVII_LU_OBF"/>
    <property type="match status" value="1"/>
</dbReference>
<dbReference type="Gene3D" id="2.40.50.1010">
    <property type="match status" value="1"/>
</dbReference>
<dbReference type="HAMAP" id="MF_00378">
    <property type="entry name" value="Exonuc_7_L"/>
    <property type="match status" value="1"/>
</dbReference>
<dbReference type="InterPro" id="IPR003753">
    <property type="entry name" value="Exonuc_VII_L"/>
</dbReference>
<dbReference type="InterPro" id="IPR020579">
    <property type="entry name" value="Exonuc_VII_lsu_C"/>
</dbReference>
<dbReference type="InterPro" id="IPR025824">
    <property type="entry name" value="OB-fold_nuc-bd_dom"/>
</dbReference>
<dbReference type="NCBIfam" id="TIGR00237">
    <property type="entry name" value="xseA"/>
    <property type="match status" value="1"/>
</dbReference>
<dbReference type="PANTHER" id="PTHR30008">
    <property type="entry name" value="EXODEOXYRIBONUCLEASE 7 LARGE SUBUNIT"/>
    <property type="match status" value="1"/>
</dbReference>
<dbReference type="PANTHER" id="PTHR30008:SF0">
    <property type="entry name" value="EXODEOXYRIBONUCLEASE 7 LARGE SUBUNIT"/>
    <property type="match status" value="1"/>
</dbReference>
<dbReference type="Pfam" id="PF02601">
    <property type="entry name" value="Exonuc_VII_L"/>
    <property type="match status" value="1"/>
</dbReference>
<dbReference type="Pfam" id="PF13742">
    <property type="entry name" value="tRNA_anti_2"/>
    <property type="match status" value="1"/>
</dbReference>
<proteinExistence type="inferred from homology"/>
<reference key="1">
    <citation type="submission" date="2008-05" db="EMBL/GenBank/DDBJ databases">
        <title>Genome sequence of Helicobacter pylori from the remote Amazon: traces of Asian ancestry of the first Americans.</title>
        <authorList>
            <person name="Kersulyte D."/>
            <person name="Kalia A."/>
            <person name="Gilman R.H."/>
            <person name="Berg D.E."/>
        </authorList>
    </citation>
    <scope>NUCLEOTIDE SEQUENCE [LARGE SCALE GENOMIC DNA]</scope>
    <source>
        <strain>Shi470</strain>
    </source>
</reference>